<accession>Q9HN27</accession>
<gene>
    <name evidence="1" type="primary">rfcS</name>
    <name type="synonym">rfcA</name>
    <name type="ordered locus">VNG_2280G</name>
</gene>
<keyword id="KW-0067">ATP-binding</keyword>
<keyword id="KW-0235">DNA replication</keyword>
<keyword id="KW-0547">Nucleotide-binding</keyword>
<keyword id="KW-1185">Reference proteome</keyword>
<feature type="chain" id="PRO_0000135973" description="Replication factor C small subunit">
    <location>
        <begin position="1"/>
        <end position="322"/>
    </location>
</feature>
<feature type="binding site" evidence="1">
    <location>
        <begin position="50"/>
        <end position="57"/>
    </location>
    <ligand>
        <name>ATP</name>
        <dbReference type="ChEBI" id="CHEBI:30616"/>
    </ligand>
</feature>
<organism>
    <name type="scientific">Halobacterium salinarum (strain ATCC 700922 / JCM 11081 / NRC-1)</name>
    <name type="common">Halobacterium halobium</name>
    <dbReference type="NCBI Taxonomy" id="64091"/>
    <lineage>
        <taxon>Archaea</taxon>
        <taxon>Methanobacteriati</taxon>
        <taxon>Methanobacteriota</taxon>
        <taxon>Stenosarchaea group</taxon>
        <taxon>Halobacteria</taxon>
        <taxon>Halobacteriales</taxon>
        <taxon>Halobacteriaceae</taxon>
        <taxon>Halobacterium</taxon>
        <taxon>Halobacterium salinarum NRC-34001</taxon>
    </lineage>
</organism>
<dbReference type="EMBL" id="AE004437">
    <property type="protein sequence ID" value="AAG20394.1"/>
    <property type="molecule type" value="Genomic_DNA"/>
</dbReference>
<dbReference type="PIR" id="F84378">
    <property type="entry name" value="F84378"/>
</dbReference>
<dbReference type="RefSeq" id="WP_010903695.1">
    <property type="nucleotide sequence ID" value="NC_002607.1"/>
</dbReference>
<dbReference type="SMR" id="Q9HN27"/>
<dbReference type="STRING" id="64091.VNG_2280G"/>
<dbReference type="PaxDb" id="64091-VNG_2280G"/>
<dbReference type="KEGG" id="hal:VNG_2280G"/>
<dbReference type="PATRIC" id="fig|64091.14.peg.1757"/>
<dbReference type="HOGENOM" id="CLU_042324_2_1_2"/>
<dbReference type="InParanoid" id="Q9HN27"/>
<dbReference type="OrthoDB" id="7928at2157"/>
<dbReference type="PhylomeDB" id="Q9HN27"/>
<dbReference type="Proteomes" id="UP000000554">
    <property type="component" value="Chromosome"/>
</dbReference>
<dbReference type="GO" id="GO:0005663">
    <property type="term" value="C:DNA replication factor C complex"/>
    <property type="evidence" value="ECO:0000318"/>
    <property type="project" value="GO_Central"/>
</dbReference>
<dbReference type="GO" id="GO:0005524">
    <property type="term" value="F:ATP binding"/>
    <property type="evidence" value="ECO:0007669"/>
    <property type="project" value="UniProtKB-UniRule"/>
</dbReference>
<dbReference type="GO" id="GO:0016887">
    <property type="term" value="F:ATP hydrolysis activity"/>
    <property type="evidence" value="ECO:0007669"/>
    <property type="project" value="InterPro"/>
</dbReference>
<dbReference type="GO" id="GO:0003677">
    <property type="term" value="F:DNA binding"/>
    <property type="evidence" value="ECO:0007669"/>
    <property type="project" value="InterPro"/>
</dbReference>
<dbReference type="GO" id="GO:0003689">
    <property type="term" value="F:DNA clamp loader activity"/>
    <property type="evidence" value="ECO:0007669"/>
    <property type="project" value="UniProtKB-UniRule"/>
</dbReference>
<dbReference type="GO" id="GO:0006281">
    <property type="term" value="P:DNA repair"/>
    <property type="evidence" value="ECO:0000318"/>
    <property type="project" value="GO_Central"/>
</dbReference>
<dbReference type="GO" id="GO:0006261">
    <property type="term" value="P:DNA-templated DNA replication"/>
    <property type="evidence" value="ECO:0000318"/>
    <property type="project" value="GO_Central"/>
</dbReference>
<dbReference type="CDD" id="cd00009">
    <property type="entry name" value="AAA"/>
    <property type="match status" value="1"/>
</dbReference>
<dbReference type="CDD" id="cd18140">
    <property type="entry name" value="HLD_clamp_RFC"/>
    <property type="match status" value="1"/>
</dbReference>
<dbReference type="FunFam" id="1.10.8.60:FF:000279">
    <property type="entry name" value="Replication factor C small subunit"/>
    <property type="match status" value="1"/>
</dbReference>
<dbReference type="FunFam" id="1.20.272.10:FF:000029">
    <property type="entry name" value="Replication factor C small subunit"/>
    <property type="match status" value="1"/>
</dbReference>
<dbReference type="FunFam" id="3.40.50.300:FF:000129">
    <property type="entry name" value="Replication factor C subunit 5"/>
    <property type="match status" value="1"/>
</dbReference>
<dbReference type="Gene3D" id="1.10.8.60">
    <property type="match status" value="1"/>
</dbReference>
<dbReference type="Gene3D" id="1.20.272.10">
    <property type="match status" value="1"/>
</dbReference>
<dbReference type="Gene3D" id="3.40.50.300">
    <property type="entry name" value="P-loop containing nucleotide triphosphate hydrolases"/>
    <property type="match status" value="1"/>
</dbReference>
<dbReference type="HAMAP" id="MF_01509">
    <property type="entry name" value="RfcS"/>
    <property type="match status" value="1"/>
</dbReference>
<dbReference type="InterPro" id="IPR003593">
    <property type="entry name" value="AAA+_ATPase"/>
</dbReference>
<dbReference type="InterPro" id="IPR003959">
    <property type="entry name" value="ATPase_AAA_core"/>
</dbReference>
<dbReference type="InterPro" id="IPR008921">
    <property type="entry name" value="DNA_pol3_clamp-load_cplx_C"/>
</dbReference>
<dbReference type="InterPro" id="IPR050238">
    <property type="entry name" value="DNA_Rep/Repair_Clamp_Loader"/>
</dbReference>
<dbReference type="InterPro" id="IPR027417">
    <property type="entry name" value="P-loop_NTPase"/>
</dbReference>
<dbReference type="InterPro" id="IPR023748">
    <property type="entry name" value="Rep_factor-C_ssu_arc"/>
</dbReference>
<dbReference type="InterPro" id="IPR013748">
    <property type="entry name" value="Rep_factorC_C"/>
</dbReference>
<dbReference type="InterPro" id="IPR047854">
    <property type="entry name" value="RFC_lid"/>
</dbReference>
<dbReference type="NCBIfam" id="NF001679">
    <property type="entry name" value="PRK00440.1"/>
    <property type="match status" value="1"/>
</dbReference>
<dbReference type="PANTHER" id="PTHR11669">
    <property type="entry name" value="REPLICATION FACTOR C / DNA POLYMERASE III GAMMA-TAU SUBUNIT"/>
    <property type="match status" value="1"/>
</dbReference>
<dbReference type="PANTHER" id="PTHR11669:SF20">
    <property type="entry name" value="REPLICATION FACTOR C SUBUNIT 4"/>
    <property type="match status" value="1"/>
</dbReference>
<dbReference type="Pfam" id="PF00004">
    <property type="entry name" value="AAA"/>
    <property type="match status" value="1"/>
</dbReference>
<dbReference type="Pfam" id="PF08542">
    <property type="entry name" value="Rep_fac_C"/>
    <property type="match status" value="1"/>
</dbReference>
<dbReference type="SMART" id="SM00382">
    <property type="entry name" value="AAA"/>
    <property type="match status" value="1"/>
</dbReference>
<dbReference type="SUPFAM" id="SSF52540">
    <property type="entry name" value="P-loop containing nucleoside triphosphate hydrolases"/>
    <property type="match status" value="1"/>
</dbReference>
<dbReference type="SUPFAM" id="SSF48019">
    <property type="entry name" value="post-AAA+ oligomerization domain-like"/>
    <property type="match status" value="1"/>
</dbReference>
<sequence length="322" mass="35358">MTDAAGGRQEIWVEKYRPERLEDVVGHPDITERLQSYVDRDDLPHLLFAGPAGTGKTASSVSIAKELYGDDWQDNFLELNASDERGIDVVRDRIKDFARSSFGGHNYRVIFLDEADALTDDAQSALRRTMEQFSNNTRFILSCNYSSKIIDPIQSRCAVFRFAQLGDDAVAAHLREIAETEGLEHTDDGIDALVYAADGDMRRAINALQAASATGDSVNEETVYAITATARPEEIETMVTEALGGDFAAARATLDDLLTNRGLAGGDIIDQVHRSVWEFDVEEAAAVRLLDRLGEADYRIAEGANERVQLEALLASVALNAE</sequence>
<reference key="1">
    <citation type="journal article" date="2000" name="Proc. Natl. Acad. Sci. U.S.A.">
        <title>Genome sequence of Halobacterium species NRC-1.</title>
        <authorList>
            <person name="Ng W.V."/>
            <person name="Kennedy S.P."/>
            <person name="Mahairas G.G."/>
            <person name="Berquist B."/>
            <person name="Pan M."/>
            <person name="Shukla H.D."/>
            <person name="Lasky S.R."/>
            <person name="Baliga N.S."/>
            <person name="Thorsson V."/>
            <person name="Sbrogna J."/>
            <person name="Swartzell S."/>
            <person name="Weir D."/>
            <person name="Hall J."/>
            <person name="Dahl T.A."/>
            <person name="Welti R."/>
            <person name="Goo Y.A."/>
            <person name="Leithauser B."/>
            <person name="Keller K."/>
            <person name="Cruz R."/>
            <person name="Danson M.J."/>
            <person name="Hough D.W."/>
            <person name="Maddocks D.G."/>
            <person name="Jablonski P.E."/>
            <person name="Krebs M.P."/>
            <person name="Angevine C.M."/>
            <person name="Dale H."/>
            <person name="Isenbarger T.A."/>
            <person name="Peck R.F."/>
            <person name="Pohlschroder M."/>
            <person name="Spudich J.L."/>
            <person name="Jung K.-H."/>
            <person name="Alam M."/>
            <person name="Freitas T."/>
            <person name="Hou S."/>
            <person name="Daniels C.J."/>
            <person name="Dennis P.P."/>
            <person name="Omer A.D."/>
            <person name="Ebhardt H."/>
            <person name="Lowe T.M."/>
            <person name="Liang P."/>
            <person name="Riley M."/>
            <person name="Hood L."/>
            <person name="DasSarma S."/>
        </authorList>
    </citation>
    <scope>NUCLEOTIDE SEQUENCE [LARGE SCALE GENOMIC DNA]</scope>
    <source>
        <strain>ATCC 700922 / JCM 11081 / NRC-1</strain>
    </source>
</reference>
<protein>
    <recommendedName>
        <fullName evidence="1">Replication factor C small subunit</fullName>
        <shortName evidence="1">RFC small subunit</shortName>
    </recommendedName>
    <alternativeName>
        <fullName evidence="1">Clamp loader small subunit</fullName>
    </alternativeName>
</protein>
<name>RFCS_HALSA</name>
<proteinExistence type="inferred from homology"/>
<comment type="function">
    <text evidence="1">Part of the RFC clamp loader complex which loads the PCNA sliding clamp onto DNA.</text>
</comment>
<comment type="subunit">
    <text evidence="1">Heteromultimer composed of small subunits (RfcS) and large subunits (RfcL).</text>
</comment>
<comment type="similarity">
    <text evidence="1">Belongs to the activator 1 small subunits family. RfcS subfamily.</text>
</comment>
<evidence type="ECO:0000255" key="1">
    <source>
        <dbReference type="HAMAP-Rule" id="MF_01509"/>
    </source>
</evidence>